<sequence length="242" mass="25596">MGRGPSIEGRKNASDAKRGKMFTKIIREISVAARAGGGDPSNNPRLRTAMDKGLSANMSKDVIERAIKKSTGELEGVEYEEVRYEGYAPGGVAVIVDCLTDNRVRTVADVRHAFSKCGGNMGTEGSVAFMFKRLGVLSFAAGIDEDTLTDAAIEAGADDVVVYPEDGAIDVLTAPDAFAQVRDALAAAGLEPAHAEIVFRADNDIAVDGDTAVQVRKLLDMLEDLDDVQDVYSNVDQAALGA</sequence>
<keyword id="KW-0963">Cytoplasm</keyword>
<keyword id="KW-0238">DNA-binding</keyword>
<keyword id="KW-0804">Transcription</keyword>
<keyword id="KW-0805">Transcription regulation</keyword>
<reference key="1">
    <citation type="journal article" date="2005" name="Jpn. Agric. Res. Q.">
        <title>Genome sequence of Xanthomonas oryzae pv. oryzae suggests contribution of large numbers of effector genes and insertion sequences to its race diversity.</title>
        <authorList>
            <person name="Ochiai H."/>
            <person name="Inoue Y."/>
            <person name="Takeya M."/>
            <person name="Sasaki A."/>
            <person name="Kaku H."/>
        </authorList>
    </citation>
    <scope>NUCLEOTIDE SEQUENCE [LARGE SCALE GENOMIC DNA]</scope>
    <source>
        <strain>MAFF 311018</strain>
    </source>
</reference>
<proteinExistence type="inferred from homology"/>
<organism>
    <name type="scientific">Xanthomonas oryzae pv. oryzae (strain MAFF 311018)</name>
    <dbReference type="NCBI Taxonomy" id="342109"/>
    <lineage>
        <taxon>Bacteria</taxon>
        <taxon>Pseudomonadati</taxon>
        <taxon>Pseudomonadota</taxon>
        <taxon>Gammaproteobacteria</taxon>
        <taxon>Lysobacterales</taxon>
        <taxon>Lysobacteraceae</taxon>
        <taxon>Xanthomonas</taxon>
    </lineage>
</organism>
<accession>Q2P579</accession>
<name>Y1543_XANOM</name>
<gene>
    <name type="ordered locus">XOO1543</name>
</gene>
<comment type="subcellular location">
    <subcellularLocation>
        <location evidence="1">Cytoplasm</location>
    </subcellularLocation>
</comment>
<comment type="similarity">
    <text evidence="1">Belongs to the TACO1 family.</text>
</comment>
<feature type="chain" id="PRO_0000257159" description="Probable transcriptional regulatory protein XOO1543">
    <location>
        <begin position="1"/>
        <end position="242"/>
    </location>
</feature>
<dbReference type="EMBL" id="AP008229">
    <property type="protein sequence ID" value="BAE68298.1"/>
    <property type="molecule type" value="Genomic_DNA"/>
</dbReference>
<dbReference type="RefSeq" id="WP_011258430.1">
    <property type="nucleotide sequence ID" value="NC_007705.1"/>
</dbReference>
<dbReference type="SMR" id="Q2P579"/>
<dbReference type="KEGG" id="xom:XOO1543"/>
<dbReference type="HOGENOM" id="CLU_062974_2_2_6"/>
<dbReference type="GO" id="GO:0005829">
    <property type="term" value="C:cytosol"/>
    <property type="evidence" value="ECO:0007669"/>
    <property type="project" value="TreeGrafter"/>
</dbReference>
<dbReference type="GO" id="GO:0003677">
    <property type="term" value="F:DNA binding"/>
    <property type="evidence" value="ECO:0007669"/>
    <property type="project" value="UniProtKB-UniRule"/>
</dbReference>
<dbReference type="GO" id="GO:0006355">
    <property type="term" value="P:regulation of DNA-templated transcription"/>
    <property type="evidence" value="ECO:0007669"/>
    <property type="project" value="UniProtKB-UniRule"/>
</dbReference>
<dbReference type="FunFam" id="1.10.10.200:FF:000007">
    <property type="entry name" value="Probable transcriptional regulatory protein AC801_15750"/>
    <property type="match status" value="1"/>
</dbReference>
<dbReference type="FunFam" id="3.30.70.980:FF:000002">
    <property type="entry name" value="Probable transcriptional regulatory protein YebC"/>
    <property type="match status" value="1"/>
</dbReference>
<dbReference type="Gene3D" id="1.10.10.200">
    <property type="match status" value="1"/>
</dbReference>
<dbReference type="Gene3D" id="3.30.70.980">
    <property type="match status" value="2"/>
</dbReference>
<dbReference type="HAMAP" id="MF_00693">
    <property type="entry name" value="Transcrip_reg_TACO1"/>
    <property type="match status" value="1"/>
</dbReference>
<dbReference type="InterPro" id="IPR017856">
    <property type="entry name" value="Integrase-like_N"/>
</dbReference>
<dbReference type="InterPro" id="IPR048300">
    <property type="entry name" value="TACO1_YebC-like_2nd/3rd_dom"/>
</dbReference>
<dbReference type="InterPro" id="IPR049083">
    <property type="entry name" value="TACO1_YebC_N"/>
</dbReference>
<dbReference type="InterPro" id="IPR002876">
    <property type="entry name" value="Transcrip_reg_TACO1-like"/>
</dbReference>
<dbReference type="InterPro" id="IPR026564">
    <property type="entry name" value="Transcrip_reg_TACO1-like_dom3"/>
</dbReference>
<dbReference type="InterPro" id="IPR029072">
    <property type="entry name" value="YebC-like"/>
</dbReference>
<dbReference type="NCBIfam" id="NF001030">
    <property type="entry name" value="PRK00110.1"/>
    <property type="match status" value="1"/>
</dbReference>
<dbReference type="NCBIfam" id="NF009044">
    <property type="entry name" value="PRK12378.1"/>
    <property type="match status" value="1"/>
</dbReference>
<dbReference type="NCBIfam" id="TIGR01033">
    <property type="entry name" value="YebC/PmpR family DNA-binding transcriptional regulator"/>
    <property type="match status" value="1"/>
</dbReference>
<dbReference type="PANTHER" id="PTHR12532:SF6">
    <property type="entry name" value="TRANSCRIPTIONAL REGULATORY PROTEIN YEBC-RELATED"/>
    <property type="match status" value="1"/>
</dbReference>
<dbReference type="PANTHER" id="PTHR12532">
    <property type="entry name" value="TRANSLATIONAL ACTIVATOR OF CYTOCHROME C OXIDASE 1"/>
    <property type="match status" value="1"/>
</dbReference>
<dbReference type="Pfam" id="PF20772">
    <property type="entry name" value="TACO1_YebC_N"/>
    <property type="match status" value="1"/>
</dbReference>
<dbReference type="Pfam" id="PF01709">
    <property type="entry name" value="Transcrip_reg"/>
    <property type="match status" value="1"/>
</dbReference>
<dbReference type="SUPFAM" id="SSF75625">
    <property type="entry name" value="YebC-like"/>
    <property type="match status" value="1"/>
</dbReference>
<protein>
    <recommendedName>
        <fullName evidence="1">Probable transcriptional regulatory protein XOO1543</fullName>
    </recommendedName>
</protein>
<evidence type="ECO:0000255" key="1">
    <source>
        <dbReference type="HAMAP-Rule" id="MF_00693"/>
    </source>
</evidence>